<feature type="chain" id="PRO_0000121486" description="Protein O-mannosyl-transferase 1">
    <location>
        <begin position="1"/>
        <end position="747"/>
    </location>
</feature>
<feature type="transmembrane region" description="Helical" evidence="3">
    <location>
        <begin position="30"/>
        <end position="50"/>
    </location>
</feature>
<feature type="transmembrane region" description="Helical" evidence="3">
    <location>
        <begin position="90"/>
        <end position="110"/>
    </location>
</feature>
<feature type="transmembrane region" description="Helical" evidence="3">
    <location>
        <begin position="121"/>
        <end position="141"/>
    </location>
</feature>
<feature type="transmembrane region" description="Helical" evidence="3">
    <location>
        <begin position="176"/>
        <end position="196"/>
    </location>
</feature>
<feature type="transmembrane region" description="Helical" evidence="3">
    <location>
        <begin position="205"/>
        <end position="225"/>
    </location>
</feature>
<feature type="transmembrane region" description="Helical" evidence="3">
    <location>
        <begin position="228"/>
        <end position="248"/>
    </location>
</feature>
<feature type="transmembrane region" description="Helical" evidence="3">
    <location>
        <begin position="267"/>
        <end position="287"/>
    </location>
</feature>
<feature type="transmembrane region" description="Helical" evidence="3">
    <location>
        <begin position="597"/>
        <end position="617"/>
    </location>
</feature>
<feature type="transmembrane region" description="Helical" evidence="3">
    <location>
        <begin position="636"/>
        <end position="656"/>
    </location>
</feature>
<feature type="transmembrane region" description="Helical" evidence="3">
    <location>
        <begin position="660"/>
        <end position="680"/>
    </location>
</feature>
<feature type="domain" description="MIR 1" evidence="4">
    <location>
        <begin position="318"/>
        <end position="381"/>
    </location>
</feature>
<feature type="domain" description="MIR 2" evidence="4">
    <location>
        <begin position="392"/>
        <end position="449"/>
    </location>
</feature>
<feature type="domain" description="MIR 3" evidence="4">
    <location>
        <begin position="453"/>
        <end position="513"/>
    </location>
</feature>
<feature type="glycosylation site" description="N-linked (GlcNAc...) asparagine" evidence="3">
    <location>
        <position position="435"/>
    </location>
</feature>
<feature type="glycosylation site" description="N-linked (GlcNAc...) asparagine" evidence="3">
    <location>
        <position position="471"/>
    </location>
</feature>
<feature type="glycosylation site" description="N-linked (GlcNAc...) asparagine" evidence="3">
    <location>
        <position position="539"/>
    </location>
</feature>
<comment type="function">
    <text evidence="2">Transfers mannosyl residues to the hydroxyl group of serine or threonine residues. Coexpression of both POMT1 and POMT2 is necessary for enzyme activity, expression of either POMT1 or POMT2 alone is insufficient. Essentially dedicated to O-mannosylation of alpha-DAG1 and few other proteins but not of cadherins and protocaherins.</text>
</comment>
<comment type="catalytic activity">
    <reaction evidence="2">
        <text>a di-trans,poly-cis-dolichyl beta-D-mannosyl phosphate + L-seryl-[protein] = 3-O-(alpha-D-mannosyl)-L-seryl-[protein] + a di-trans,poly-cis-dolichyl phosphate + H(+)</text>
        <dbReference type="Rhea" id="RHEA:17377"/>
        <dbReference type="Rhea" id="RHEA-COMP:9863"/>
        <dbReference type="Rhea" id="RHEA-COMP:13546"/>
        <dbReference type="Rhea" id="RHEA-COMP:19498"/>
        <dbReference type="Rhea" id="RHEA-COMP:19501"/>
        <dbReference type="ChEBI" id="CHEBI:15378"/>
        <dbReference type="ChEBI" id="CHEBI:29999"/>
        <dbReference type="ChEBI" id="CHEBI:57683"/>
        <dbReference type="ChEBI" id="CHEBI:58211"/>
        <dbReference type="ChEBI" id="CHEBI:137321"/>
        <dbReference type="EC" id="2.4.1.109"/>
    </reaction>
</comment>
<comment type="catalytic activity">
    <reaction evidence="2">
        <text>a di-trans,poly-cis-dolichyl beta-D-mannosyl phosphate + L-threonyl-[protein] = 3-O-(alpha-D-mannosyl)-L-threonyl-[protein] + a di-trans,poly-cis-dolichyl phosphate + H(+)</text>
        <dbReference type="Rhea" id="RHEA:53396"/>
        <dbReference type="Rhea" id="RHEA-COMP:11060"/>
        <dbReference type="Rhea" id="RHEA-COMP:13547"/>
        <dbReference type="Rhea" id="RHEA-COMP:19498"/>
        <dbReference type="Rhea" id="RHEA-COMP:19501"/>
        <dbReference type="ChEBI" id="CHEBI:15378"/>
        <dbReference type="ChEBI" id="CHEBI:30013"/>
        <dbReference type="ChEBI" id="CHEBI:57683"/>
        <dbReference type="ChEBI" id="CHEBI:58211"/>
        <dbReference type="ChEBI" id="CHEBI:137323"/>
        <dbReference type="EC" id="2.4.1.109"/>
    </reaction>
</comment>
<comment type="pathway">
    <text>Protein modification; protein glycosylation.</text>
</comment>
<comment type="subcellular location">
    <subcellularLocation>
        <location evidence="1">Endoplasmic reticulum membrane</location>
        <topology evidence="1">Multi-pass membrane protein</topology>
    </subcellularLocation>
</comment>
<comment type="similarity">
    <text evidence="5">Belongs to the glycosyltransferase 39 family.</text>
</comment>
<comment type="sequence caution" evidence="5">
    <conflict type="miscellaneous discrepancy">
        <sequence resource="EMBL-CDS" id="AAH70912"/>
    </conflict>
    <text>Intron retention.</text>
</comment>
<evidence type="ECO:0000250" key="1"/>
<evidence type="ECO:0000250" key="2">
    <source>
        <dbReference type="UniProtKB" id="Q9Y6A1"/>
    </source>
</evidence>
<evidence type="ECO:0000255" key="3"/>
<evidence type="ECO:0000255" key="4">
    <source>
        <dbReference type="PROSITE-ProRule" id="PRU00131"/>
    </source>
</evidence>
<evidence type="ECO:0000305" key="5"/>
<sequence>MGNRSMGREDTLGVLPSLLFCKMLRFLKRPLVVTIDINLNLVALTVLGLLTRLWQLSYPRAVVFDEVYYGQYISFYMKRVFFLDDSGPPFGHMLLALGGWLGGFDGNFLWNRIGAEYSSNVPVWSLRLLPALAGALSVPMAYQIVLELHFSHCTAMGAALLMLIENALITQSRLMLLESILIFFNLLAVLSYLKFFNSQTHSPFSVHWWLWLMLTGVSCSCAVGIKYMGIFTYLLVLSIAAVHAWHLIGDQTLSNICVLSHLLARAVALLVVPVFLYLLFFYVHLMLLYRSGPHDQIMSSAFQASLEGGLARITQGQPLEVAFGSQVTLKSVSGKPLPCWLHSHKNTYPMIYENGRGSSHQQQVTCYPFKDINNWWIVKDPGRHQLVVNNPPRPVRHGDIVQLVHGMTTRLLNTHDVAAPLSPHSQEVSCYIDYNISMPAQNLWKLDIVNRESNQDTWKTILSEVRFVHVNTSAILKLSGAHLPDWGFRQLEVVGEKLSLGPHESMVWNVEEHRYGRGHEQKERELELHSPTQHDISRNLSFMARFSELQWKMLTLKNEDLEHQYSSTPLEWLTLDTNIAYWLHPRTSAQIHLLGNIVIWTSASLATVAYTLLFFWYLLRRRRNICDLPEDAWSHWVLAGALCIGGWALNYLPFFLMERMLFLYHYLPALTFQILLLPIVMQHASDHLCRSQLQRNVFSALVVAWYSSACHVSNMLRPLTYGDTSLSPGELRALRWKDSWDILIRKY</sequence>
<keyword id="KW-0256">Endoplasmic reticulum</keyword>
<keyword id="KW-0325">Glycoprotein</keyword>
<keyword id="KW-0328">Glycosyltransferase</keyword>
<keyword id="KW-0472">Membrane</keyword>
<keyword id="KW-1185">Reference proteome</keyword>
<keyword id="KW-0677">Repeat</keyword>
<keyword id="KW-0808">Transferase</keyword>
<keyword id="KW-0812">Transmembrane</keyword>
<keyword id="KW-1133">Transmembrane helix</keyword>
<name>POMT1_RAT</name>
<protein>
    <recommendedName>
        <fullName>Protein O-mannosyl-transferase 1</fullName>
        <ecNumber>2.4.1.109</ecNumber>
    </recommendedName>
    <alternativeName>
        <fullName>Dolichyl-phosphate-mannose--protein mannosyltransferase 1</fullName>
    </alternativeName>
</protein>
<dbReference type="EC" id="2.4.1.109"/>
<dbReference type="EMBL" id="AF192388">
    <property type="protein sequence ID" value="AAG53461.1"/>
    <property type="molecule type" value="mRNA"/>
</dbReference>
<dbReference type="EMBL" id="BC070912">
    <property type="protein sequence ID" value="AAH70912.1"/>
    <property type="status" value="ALT_SEQ"/>
    <property type="molecule type" value="mRNA"/>
</dbReference>
<dbReference type="RefSeq" id="NP_445858.1">
    <property type="nucleotide sequence ID" value="NM_053406.2"/>
</dbReference>
<dbReference type="RefSeq" id="XP_038961907.1">
    <property type="nucleotide sequence ID" value="XM_039105979.2"/>
</dbReference>
<dbReference type="SMR" id="Q99PR0"/>
<dbReference type="FunCoup" id="Q99PR0">
    <property type="interactions" value="992"/>
</dbReference>
<dbReference type="STRING" id="10116.ENSRNOP00000015214"/>
<dbReference type="CAZy" id="GT39">
    <property type="family name" value="Glycosyltransferase Family 39"/>
</dbReference>
<dbReference type="GlyCosmos" id="Q99PR0">
    <property type="glycosylation" value="3 sites, 2 glycans"/>
</dbReference>
<dbReference type="GlyGen" id="Q99PR0">
    <property type="glycosylation" value="3 sites, 2 N-linked glycans (1 site)"/>
</dbReference>
<dbReference type="iPTMnet" id="Q99PR0"/>
<dbReference type="PhosphoSitePlus" id="Q99PR0"/>
<dbReference type="PaxDb" id="10116-ENSRNOP00000015214"/>
<dbReference type="Ensembl" id="ENSRNOT00000015214.5">
    <property type="protein sequence ID" value="ENSRNOP00000015214.3"/>
    <property type="gene ID" value="ENSRNOG00000010477.7"/>
</dbReference>
<dbReference type="GeneID" id="84430"/>
<dbReference type="KEGG" id="rno:84430"/>
<dbReference type="UCSC" id="RGD:620078">
    <property type="organism name" value="rat"/>
</dbReference>
<dbReference type="AGR" id="RGD:620078"/>
<dbReference type="CTD" id="10585"/>
<dbReference type="RGD" id="620078">
    <property type="gene designation" value="Pomt1"/>
</dbReference>
<dbReference type="eggNOG" id="KOG3359">
    <property type="taxonomic scope" value="Eukaryota"/>
</dbReference>
<dbReference type="GeneTree" id="ENSGT00940000158049"/>
<dbReference type="InParanoid" id="Q99PR0"/>
<dbReference type="OMA" id="NCHLNAP"/>
<dbReference type="OrthoDB" id="56722at9989"/>
<dbReference type="PhylomeDB" id="Q99PR0"/>
<dbReference type="TreeFam" id="TF300552"/>
<dbReference type="BRENDA" id="2.4.1.109">
    <property type="organism ID" value="5301"/>
</dbReference>
<dbReference type="Reactome" id="R-RNO-5173105">
    <property type="pathway name" value="O-linked glycosylation"/>
</dbReference>
<dbReference type="UniPathway" id="UPA00378"/>
<dbReference type="PRO" id="PR:Q99PR0"/>
<dbReference type="Proteomes" id="UP000002494">
    <property type="component" value="Chromosome 3"/>
</dbReference>
<dbReference type="Bgee" id="ENSRNOG00000010477">
    <property type="expression patterns" value="Expressed in testis and 19 other cell types or tissues"/>
</dbReference>
<dbReference type="ExpressionAtlas" id="Q99PR0">
    <property type="expression patterns" value="baseline and differential"/>
</dbReference>
<dbReference type="GO" id="GO:0001669">
    <property type="term" value="C:acrosomal vesicle"/>
    <property type="evidence" value="ECO:0000266"/>
    <property type="project" value="RGD"/>
</dbReference>
<dbReference type="GO" id="GO:0031502">
    <property type="term" value="C:dolichyl-phosphate-mannose-protein mannosyltransferase complex"/>
    <property type="evidence" value="ECO:0000266"/>
    <property type="project" value="RGD"/>
</dbReference>
<dbReference type="GO" id="GO:0005789">
    <property type="term" value="C:endoplasmic reticulum membrane"/>
    <property type="evidence" value="ECO:0000250"/>
    <property type="project" value="UniProtKB"/>
</dbReference>
<dbReference type="GO" id="GO:0016529">
    <property type="term" value="C:sarcoplasmic reticulum"/>
    <property type="evidence" value="ECO:0000266"/>
    <property type="project" value="RGD"/>
</dbReference>
<dbReference type="GO" id="GO:0004169">
    <property type="term" value="F:dolichyl-phosphate-mannose-protein mannosyltransferase activity"/>
    <property type="evidence" value="ECO:0007669"/>
    <property type="project" value="UniProtKB-EC"/>
</dbReference>
<dbReference type="GO" id="GO:0000030">
    <property type="term" value="F:mannosyltransferase activity"/>
    <property type="evidence" value="ECO:0000250"/>
    <property type="project" value="UniProtKB"/>
</dbReference>
<dbReference type="GO" id="GO:0030198">
    <property type="term" value="P:extracellular matrix organization"/>
    <property type="evidence" value="ECO:0000266"/>
    <property type="project" value="RGD"/>
</dbReference>
<dbReference type="GO" id="GO:0035269">
    <property type="term" value="P:protein O-linked mannosylation"/>
    <property type="evidence" value="ECO:0000250"/>
    <property type="project" value="UniProtKB"/>
</dbReference>
<dbReference type="CDD" id="cd23281">
    <property type="entry name" value="beta-trefoil_MIR_POMT1"/>
    <property type="match status" value="1"/>
</dbReference>
<dbReference type="FunFam" id="2.80.10.50:FF:000012">
    <property type="entry name" value="Protein O-mannosyl-transferase 1"/>
    <property type="match status" value="1"/>
</dbReference>
<dbReference type="Gene3D" id="2.80.10.50">
    <property type="match status" value="1"/>
</dbReference>
<dbReference type="InterPro" id="IPR027005">
    <property type="entry name" value="GlyclTrfase_39-like"/>
</dbReference>
<dbReference type="InterPro" id="IPR003342">
    <property type="entry name" value="Glyco_trans_39/83"/>
</dbReference>
<dbReference type="InterPro" id="IPR036300">
    <property type="entry name" value="MIR_dom_sf"/>
</dbReference>
<dbReference type="InterPro" id="IPR016093">
    <property type="entry name" value="MIR_motif"/>
</dbReference>
<dbReference type="InterPro" id="IPR032421">
    <property type="entry name" value="PMT_4TMC"/>
</dbReference>
<dbReference type="PANTHER" id="PTHR10050">
    <property type="entry name" value="DOLICHYL-PHOSPHATE-MANNOSE--PROTEIN MANNOSYLTRANSFERASE"/>
    <property type="match status" value="1"/>
</dbReference>
<dbReference type="PANTHER" id="PTHR10050:SF51">
    <property type="entry name" value="PROTEIN O-MANNOSYL-TRANSFERASE 1"/>
    <property type="match status" value="1"/>
</dbReference>
<dbReference type="Pfam" id="PF02815">
    <property type="entry name" value="MIR"/>
    <property type="match status" value="1"/>
</dbReference>
<dbReference type="Pfam" id="PF02366">
    <property type="entry name" value="PMT"/>
    <property type="match status" value="1"/>
</dbReference>
<dbReference type="Pfam" id="PF16192">
    <property type="entry name" value="PMT_4TMC"/>
    <property type="match status" value="1"/>
</dbReference>
<dbReference type="SMART" id="SM00472">
    <property type="entry name" value="MIR"/>
    <property type="match status" value="3"/>
</dbReference>
<dbReference type="SUPFAM" id="SSF82109">
    <property type="entry name" value="MIR domain"/>
    <property type="match status" value="1"/>
</dbReference>
<dbReference type="PROSITE" id="PS50919">
    <property type="entry name" value="MIR"/>
    <property type="match status" value="3"/>
</dbReference>
<reference key="1">
    <citation type="submission" date="1999-10" db="EMBL/GenBank/DDBJ databases">
        <title>Molecular cloning of a rat homologue of the Saccharomyces protein O-mannosyltransferase gene.</title>
        <authorList>
            <person name="Chiba A."/>
            <person name="Ronca F."/>
            <person name="Popp S."/>
            <person name="Margolis R.U."/>
        </authorList>
    </citation>
    <scope>NUCLEOTIDE SEQUENCE [MRNA]</scope>
    <source>
        <strain>Sprague-Dawley</strain>
        <tissue>Brain</tissue>
    </source>
</reference>
<reference key="2">
    <citation type="journal article" date="2004" name="Genome Res.">
        <title>The status, quality, and expansion of the NIH full-length cDNA project: the Mammalian Gene Collection (MGC).</title>
        <authorList>
            <consortium name="The MGC Project Team"/>
        </authorList>
    </citation>
    <scope>NUCLEOTIDE SEQUENCE [LARGE SCALE MRNA]</scope>
    <source>
        <tissue>Heart</tissue>
    </source>
</reference>
<gene>
    <name type="primary">Pomt1</name>
</gene>
<organism>
    <name type="scientific">Rattus norvegicus</name>
    <name type="common">Rat</name>
    <dbReference type="NCBI Taxonomy" id="10116"/>
    <lineage>
        <taxon>Eukaryota</taxon>
        <taxon>Metazoa</taxon>
        <taxon>Chordata</taxon>
        <taxon>Craniata</taxon>
        <taxon>Vertebrata</taxon>
        <taxon>Euteleostomi</taxon>
        <taxon>Mammalia</taxon>
        <taxon>Eutheria</taxon>
        <taxon>Euarchontoglires</taxon>
        <taxon>Glires</taxon>
        <taxon>Rodentia</taxon>
        <taxon>Myomorpha</taxon>
        <taxon>Muroidea</taxon>
        <taxon>Muridae</taxon>
        <taxon>Murinae</taxon>
        <taxon>Rattus</taxon>
    </lineage>
</organism>
<proteinExistence type="evidence at transcript level"/>
<accession>Q99PR0</accession>
<accession>Q6IRI2</accession>